<organism>
    <name type="scientific">Pseudomonas savastanoi pv. phaseolicola (strain 1448A / Race 6)</name>
    <name type="common">Pseudomonas syringae pv. phaseolicola (strain 1448A / Race 6)</name>
    <dbReference type="NCBI Taxonomy" id="264730"/>
    <lineage>
        <taxon>Bacteria</taxon>
        <taxon>Pseudomonadati</taxon>
        <taxon>Pseudomonadota</taxon>
        <taxon>Gammaproteobacteria</taxon>
        <taxon>Pseudomonadales</taxon>
        <taxon>Pseudomonadaceae</taxon>
        <taxon>Pseudomonas</taxon>
    </lineage>
</organism>
<dbReference type="EC" id="2.9.1.3" evidence="1"/>
<dbReference type="EMBL" id="CP000058">
    <property type="protein sequence ID" value="AAZ36879.1"/>
    <property type="molecule type" value="Genomic_DNA"/>
</dbReference>
<dbReference type="SMR" id="Q48NL9"/>
<dbReference type="KEGG" id="psp:PSPPH_0708"/>
<dbReference type="eggNOG" id="COG2603">
    <property type="taxonomic scope" value="Bacteria"/>
</dbReference>
<dbReference type="HOGENOM" id="CLU_043456_1_0_6"/>
<dbReference type="Proteomes" id="UP000000551">
    <property type="component" value="Chromosome"/>
</dbReference>
<dbReference type="GO" id="GO:0016765">
    <property type="term" value="F:transferase activity, transferring alkyl or aryl (other than methyl) groups"/>
    <property type="evidence" value="ECO:0007669"/>
    <property type="project" value="UniProtKB-UniRule"/>
</dbReference>
<dbReference type="GO" id="GO:0043828">
    <property type="term" value="F:tRNA 2-selenouridine synthase activity"/>
    <property type="evidence" value="ECO:0007669"/>
    <property type="project" value="UniProtKB-EC"/>
</dbReference>
<dbReference type="GO" id="GO:0002098">
    <property type="term" value="P:tRNA wobble uridine modification"/>
    <property type="evidence" value="ECO:0007669"/>
    <property type="project" value="UniProtKB-UniRule"/>
</dbReference>
<dbReference type="CDD" id="cd01520">
    <property type="entry name" value="RHOD_YbbB"/>
    <property type="match status" value="1"/>
</dbReference>
<dbReference type="Gene3D" id="3.40.250.10">
    <property type="entry name" value="Rhodanese-like domain"/>
    <property type="match status" value="1"/>
</dbReference>
<dbReference type="HAMAP" id="MF_01622">
    <property type="entry name" value="tRNA_sel_U_synth"/>
    <property type="match status" value="1"/>
</dbReference>
<dbReference type="InterPro" id="IPR001763">
    <property type="entry name" value="Rhodanese-like_dom"/>
</dbReference>
<dbReference type="InterPro" id="IPR036873">
    <property type="entry name" value="Rhodanese-like_dom_sf"/>
</dbReference>
<dbReference type="InterPro" id="IPR017582">
    <property type="entry name" value="SelU"/>
</dbReference>
<dbReference type="NCBIfam" id="NF008750">
    <property type="entry name" value="PRK11784.1-2"/>
    <property type="match status" value="1"/>
</dbReference>
<dbReference type="NCBIfam" id="NF008751">
    <property type="entry name" value="PRK11784.1-3"/>
    <property type="match status" value="1"/>
</dbReference>
<dbReference type="NCBIfam" id="TIGR03167">
    <property type="entry name" value="tRNA_sel_U_synt"/>
    <property type="match status" value="1"/>
</dbReference>
<dbReference type="PANTHER" id="PTHR30401">
    <property type="entry name" value="TRNA 2-SELENOURIDINE SYNTHASE"/>
    <property type="match status" value="1"/>
</dbReference>
<dbReference type="PANTHER" id="PTHR30401:SF0">
    <property type="entry name" value="TRNA 2-SELENOURIDINE SYNTHASE"/>
    <property type="match status" value="1"/>
</dbReference>
<dbReference type="SMART" id="SM00450">
    <property type="entry name" value="RHOD"/>
    <property type="match status" value="1"/>
</dbReference>
<dbReference type="SUPFAM" id="SSF52821">
    <property type="entry name" value="Rhodanese/Cell cycle control phosphatase"/>
    <property type="match status" value="1"/>
</dbReference>
<dbReference type="PROSITE" id="PS50206">
    <property type="entry name" value="RHODANESE_3"/>
    <property type="match status" value="1"/>
</dbReference>
<sequence length="366" mass="41365">MADNSSDYRALFLNDVPMMDARAPVEFSKGAFPGVINLPLMNDIERQKVGTCYKQHGQDAAIQLGHQLVCGQVKDERVNAWVEFAKANPDGYLYCFRGGLRSQTVQRWLKDAGVDYPRIIGGYKAMRTFLLDTLHEAVSECDIVVLGGMTSTGKTEVLTQLRNSLDLEGIANHRGSSFGKRATGQPAQIDFENRLAIDLLKKRAAGIEQFVVEDESRLVGSCNVPLELHQTMQGCPMVWLEDSFENRVERILDDYVINLCAEFITVKGEEQGFGLFAERLLQSLNNIHKRLGGERHQRLSGLMQTALEEQQRSGTVDLHRGWIEGLLGEYYDPMYAYQREHKAARIEFAGNQVDVLDYLRERSDKR</sequence>
<accession>Q48NL9</accession>
<proteinExistence type="inferred from homology"/>
<gene>
    <name evidence="1" type="primary">selU</name>
    <name type="ordered locus">PSPPH_0708</name>
</gene>
<keyword id="KW-0711">Selenium</keyword>
<keyword id="KW-0808">Transferase</keyword>
<reference key="1">
    <citation type="journal article" date="2005" name="J. Bacteriol.">
        <title>Whole-genome sequence analysis of Pseudomonas syringae pv. phaseolicola 1448A reveals divergence among pathovars in genes involved in virulence and transposition.</title>
        <authorList>
            <person name="Joardar V."/>
            <person name="Lindeberg M."/>
            <person name="Jackson R.W."/>
            <person name="Selengut J."/>
            <person name="Dodson R."/>
            <person name="Brinkac L.M."/>
            <person name="Daugherty S.C."/>
            <person name="DeBoy R.T."/>
            <person name="Durkin A.S."/>
            <person name="Gwinn Giglio M."/>
            <person name="Madupu R."/>
            <person name="Nelson W.C."/>
            <person name="Rosovitz M.J."/>
            <person name="Sullivan S.A."/>
            <person name="Crabtree J."/>
            <person name="Creasy T."/>
            <person name="Davidsen T.M."/>
            <person name="Haft D.H."/>
            <person name="Zafar N."/>
            <person name="Zhou L."/>
            <person name="Halpin R."/>
            <person name="Holley T."/>
            <person name="Khouri H.M."/>
            <person name="Feldblyum T.V."/>
            <person name="White O."/>
            <person name="Fraser C.M."/>
            <person name="Chatterjee A.K."/>
            <person name="Cartinhour S."/>
            <person name="Schneider D."/>
            <person name="Mansfield J.W."/>
            <person name="Collmer A."/>
            <person name="Buell R."/>
        </authorList>
    </citation>
    <scope>NUCLEOTIDE SEQUENCE [LARGE SCALE GENOMIC DNA]</scope>
    <source>
        <strain>1448A / Race 6</strain>
    </source>
</reference>
<name>SELU_PSE14</name>
<evidence type="ECO:0000255" key="1">
    <source>
        <dbReference type="HAMAP-Rule" id="MF_01622"/>
    </source>
</evidence>
<feature type="chain" id="PRO_0000210867" description="tRNA 2-selenouridine synthase">
    <location>
        <begin position="1"/>
        <end position="366"/>
    </location>
</feature>
<feature type="domain" description="Rhodanese" evidence="1">
    <location>
        <begin position="12"/>
        <end position="135"/>
    </location>
</feature>
<feature type="active site" description="S-selanylcysteine intermediate" evidence="1">
    <location>
        <position position="95"/>
    </location>
</feature>
<comment type="function">
    <text evidence="1">Involved in the post-transcriptional modification of the uridine at the wobble position (U34) of tRNA(Lys), tRNA(Glu) and tRNA(Gln). Catalyzes the conversion of 2-thiouridine (S2U-RNA) to 2-selenouridine (Se2U-RNA). Acts in a two-step process involving geranylation of 2-thiouridine (S2U) to S-geranyl-2-thiouridine (geS2U) and subsequent selenation of the latter derivative to 2-selenouridine (Se2U) in the tRNA chain.</text>
</comment>
<comment type="catalytic activity">
    <reaction evidence="1">
        <text>5-methylaminomethyl-2-thiouridine(34) in tRNA + selenophosphate + (2E)-geranyl diphosphate + H2O + H(+) = 5-methylaminomethyl-2-selenouridine(34) in tRNA + (2E)-thiogeraniol + phosphate + diphosphate</text>
        <dbReference type="Rhea" id="RHEA:42716"/>
        <dbReference type="Rhea" id="RHEA-COMP:10195"/>
        <dbReference type="Rhea" id="RHEA-COMP:10196"/>
        <dbReference type="ChEBI" id="CHEBI:15377"/>
        <dbReference type="ChEBI" id="CHEBI:15378"/>
        <dbReference type="ChEBI" id="CHEBI:16144"/>
        <dbReference type="ChEBI" id="CHEBI:33019"/>
        <dbReference type="ChEBI" id="CHEBI:43474"/>
        <dbReference type="ChEBI" id="CHEBI:58057"/>
        <dbReference type="ChEBI" id="CHEBI:74455"/>
        <dbReference type="ChEBI" id="CHEBI:82743"/>
        <dbReference type="ChEBI" id="CHEBI:143703"/>
        <dbReference type="EC" id="2.9.1.3"/>
    </reaction>
    <physiologicalReaction direction="left-to-right" evidence="1">
        <dbReference type="Rhea" id="RHEA:42717"/>
    </physiologicalReaction>
</comment>
<comment type="catalytic activity">
    <reaction evidence="1">
        <text>5-methylaminomethyl-2-thiouridine(34) in tRNA + (2E)-geranyl diphosphate = 5-methylaminomethyl-S-(2E)-geranyl-thiouridine(34) in tRNA + diphosphate</text>
        <dbReference type="Rhea" id="RHEA:14085"/>
        <dbReference type="Rhea" id="RHEA-COMP:10195"/>
        <dbReference type="Rhea" id="RHEA-COMP:14654"/>
        <dbReference type="ChEBI" id="CHEBI:33019"/>
        <dbReference type="ChEBI" id="CHEBI:58057"/>
        <dbReference type="ChEBI" id="CHEBI:74455"/>
        <dbReference type="ChEBI" id="CHEBI:140632"/>
    </reaction>
    <physiologicalReaction direction="left-to-right" evidence="1">
        <dbReference type="Rhea" id="RHEA:14086"/>
    </physiologicalReaction>
</comment>
<comment type="catalytic activity">
    <reaction evidence="1">
        <text>5-methylaminomethyl-S-(2E)-geranyl-thiouridine(34) in tRNA + selenophosphate + H(+) = 5-methylaminomethyl-2-(Se-phospho)selenouridine(34) in tRNA + (2E)-thiogeraniol</text>
        <dbReference type="Rhea" id="RHEA:60172"/>
        <dbReference type="Rhea" id="RHEA-COMP:14654"/>
        <dbReference type="Rhea" id="RHEA-COMP:15523"/>
        <dbReference type="ChEBI" id="CHEBI:15378"/>
        <dbReference type="ChEBI" id="CHEBI:16144"/>
        <dbReference type="ChEBI" id="CHEBI:140632"/>
        <dbReference type="ChEBI" id="CHEBI:143702"/>
        <dbReference type="ChEBI" id="CHEBI:143703"/>
    </reaction>
    <physiologicalReaction direction="left-to-right" evidence="1">
        <dbReference type="Rhea" id="RHEA:60173"/>
    </physiologicalReaction>
</comment>
<comment type="catalytic activity">
    <reaction evidence="1">
        <text>5-methylaminomethyl-2-(Se-phospho)selenouridine(34) in tRNA + H2O = 5-methylaminomethyl-2-selenouridine(34) in tRNA + phosphate</text>
        <dbReference type="Rhea" id="RHEA:60176"/>
        <dbReference type="Rhea" id="RHEA-COMP:10196"/>
        <dbReference type="Rhea" id="RHEA-COMP:15523"/>
        <dbReference type="ChEBI" id="CHEBI:15377"/>
        <dbReference type="ChEBI" id="CHEBI:43474"/>
        <dbReference type="ChEBI" id="CHEBI:82743"/>
        <dbReference type="ChEBI" id="CHEBI:143702"/>
    </reaction>
    <physiologicalReaction direction="left-to-right" evidence="1">
        <dbReference type="Rhea" id="RHEA:60177"/>
    </physiologicalReaction>
</comment>
<comment type="subunit">
    <text evidence="1">Monomer.</text>
</comment>
<comment type="similarity">
    <text evidence="1">Belongs to the SelU family.</text>
</comment>
<protein>
    <recommendedName>
        <fullName evidence="1">tRNA 2-selenouridine synthase</fullName>
        <ecNumber evidence="1">2.9.1.3</ecNumber>
    </recommendedName>
</protein>